<accession>A3N575</accession>
<organism>
    <name type="scientific">Burkholderia pseudomallei (strain 668)</name>
    <dbReference type="NCBI Taxonomy" id="320373"/>
    <lineage>
        <taxon>Bacteria</taxon>
        <taxon>Pseudomonadati</taxon>
        <taxon>Pseudomonadota</taxon>
        <taxon>Betaproteobacteria</taxon>
        <taxon>Burkholderiales</taxon>
        <taxon>Burkholderiaceae</taxon>
        <taxon>Burkholderia</taxon>
        <taxon>pseudomallei group</taxon>
    </lineage>
</organism>
<comment type="function">
    <text evidence="1">Catalyzes the transfer of endogenously produced octanoic acid from octanoyl-acyl-carrier-protein onto the lipoyl domains of lipoate-dependent enzymes. Lipoyl-ACP can also act as a substrate although octanoyl-ACP is likely to be the physiological substrate.</text>
</comment>
<comment type="catalytic activity">
    <reaction evidence="1">
        <text>octanoyl-[ACP] + L-lysyl-[protein] = N(6)-octanoyl-L-lysyl-[protein] + holo-[ACP] + H(+)</text>
        <dbReference type="Rhea" id="RHEA:17665"/>
        <dbReference type="Rhea" id="RHEA-COMP:9636"/>
        <dbReference type="Rhea" id="RHEA-COMP:9685"/>
        <dbReference type="Rhea" id="RHEA-COMP:9752"/>
        <dbReference type="Rhea" id="RHEA-COMP:9928"/>
        <dbReference type="ChEBI" id="CHEBI:15378"/>
        <dbReference type="ChEBI" id="CHEBI:29969"/>
        <dbReference type="ChEBI" id="CHEBI:64479"/>
        <dbReference type="ChEBI" id="CHEBI:78463"/>
        <dbReference type="ChEBI" id="CHEBI:78809"/>
        <dbReference type="EC" id="2.3.1.181"/>
    </reaction>
</comment>
<comment type="pathway">
    <text evidence="1">Protein modification; protein lipoylation via endogenous pathway; protein N(6)-(lipoyl)lysine from octanoyl-[acyl-carrier-protein]: step 1/2.</text>
</comment>
<comment type="subcellular location">
    <subcellularLocation>
        <location evidence="1">Cytoplasm</location>
    </subcellularLocation>
</comment>
<comment type="miscellaneous">
    <text evidence="1">In the reaction, the free carboxyl group of octanoic acid is attached via an amide linkage to the epsilon-amino group of a specific lysine residue of lipoyl domains of lipoate-dependent enzymes.</text>
</comment>
<comment type="similarity">
    <text evidence="1">Belongs to the LipB family.</text>
</comment>
<protein>
    <recommendedName>
        <fullName evidence="1">Octanoyltransferase</fullName>
        <ecNumber evidence="1">2.3.1.181</ecNumber>
    </recommendedName>
    <alternativeName>
        <fullName evidence="1">Lipoate-protein ligase B</fullName>
    </alternativeName>
    <alternativeName>
        <fullName evidence="1">Lipoyl/octanoyl transferase</fullName>
    </alternativeName>
    <alternativeName>
        <fullName evidence="1">Octanoyl-[acyl-carrier-protein]-protein N-octanoyltransferase</fullName>
    </alternativeName>
</protein>
<name>LIPB_BURP6</name>
<sequence>MPSAPAAPAAPAAPDAAASVAPNPPAALPVTVRWLGETPYDACFDAMRAFTDARTPDTDDEIWVVEHPPVYTLGQAGNPAHLLVADSGVPLVKVDRGGQITYHGPGQIVAYLLVDLRRRKLMVRTLVTRIEEAVIETLAAYNLASARKAGAPGIYVESGPHRGAKIAALGLKIRNGCSYHGLSVNVKMDLRPFLAINPCGYAGLETIDMASLGATADWHEVAQTLVRRLIAHLDGATAAAALPQQALEQSND</sequence>
<feature type="chain" id="PRO_0000321627" description="Octanoyltransferase">
    <location>
        <begin position="1"/>
        <end position="252"/>
    </location>
</feature>
<feature type="domain" description="BPL/LPL catalytic" evidence="2">
    <location>
        <begin position="56"/>
        <end position="237"/>
    </location>
</feature>
<feature type="region of interest" description="Disordered" evidence="3">
    <location>
        <begin position="1"/>
        <end position="22"/>
    </location>
</feature>
<feature type="compositionally biased region" description="Low complexity" evidence="3">
    <location>
        <begin position="1"/>
        <end position="21"/>
    </location>
</feature>
<feature type="active site" description="Acyl-thioester intermediate" evidence="1">
    <location>
        <position position="199"/>
    </location>
</feature>
<feature type="binding site" evidence="1">
    <location>
        <begin position="96"/>
        <end position="103"/>
    </location>
    <ligand>
        <name>substrate</name>
    </ligand>
</feature>
<feature type="binding site" evidence="1">
    <location>
        <begin position="168"/>
        <end position="170"/>
    </location>
    <ligand>
        <name>substrate</name>
    </ligand>
</feature>
<feature type="binding site" evidence="1">
    <location>
        <begin position="181"/>
        <end position="183"/>
    </location>
    <ligand>
        <name>substrate</name>
    </ligand>
</feature>
<feature type="site" description="Lowers pKa of active site Cys" evidence="1">
    <location>
        <position position="165"/>
    </location>
</feature>
<gene>
    <name evidence="1" type="primary">lipB</name>
    <name type="ordered locus">BURPS668_0443</name>
</gene>
<dbReference type="EC" id="2.3.1.181" evidence="1"/>
<dbReference type="EMBL" id="CP000570">
    <property type="protein sequence ID" value="ABN82383.1"/>
    <property type="molecule type" value="Genomic_DNA"/>
</dbReference>
<dbReference type="SMR" id="A3N575"/>
<dbReference type="KEGG" id="bpd:BURPS668_0443"/>
<dbReference type="HOGENOM" id="CLU_035168_3_1_4"/>
<dbReference type="UniPathway" id="UPA00538">
    <property type="reaction ID" value="UER00592"/>
</dbReference>
<dbReference type="GO" id="GO:0005737">
    <property type="term" value="C:cytoplasm"/>
    <property type="evidence" value="ECO:0007669"/>
    <property type="project" value="UniProtKB-SubCell"/>
</dbReference>
<dbReference type="GO" id="GO:0033819">
    <property type="term" value="F:lipoyl(octanoyl) transferase activity"/>
    <property type="evidence" value="ECO:0007669"/>
    <property type="project" value="UniProtKB-EC"/>
</dbReference>
<dbReference type="GO" id="GO:0036211">
    <property type="term" value="P:protein modification process"/>
    <property type="evidence" value="ECO:0007669"/>
    <property type="project" value="InterPro"/>
</dbReference>
<dbReference type="CDD" id="cd16444">
    <property type="entry name" value="LipB"/>
    <property type="match status" value="1"/>
</dbReference>
<dbReference type="FunFam" id="3.30.930.10:FF:000020">
    <property type="entry name" value="Octanoyltransferase"/>
    <property type="match status" value="1"/>
</dbReference>
<dbReference type="Gene3D" id="3.30.930.10">
    <property type="entry name" value="Bira Bifunctional Protein, Domain 2"/>
    <property type="match status" value="1"/>
</dbReference>
<dbReference type="HAMAP" id="MF_00013">
    <property type="entry name" value="LipB"/>
    <property type="match status" value="1"/>
</dbReference>
<dbReference type="InterPro" id="IPR045864">
    <property type="entry name" value="aa-tRNA-synth_II/BPL/LPL"/>
</dbReference>
<dbReference type="InterPro" id="IPR004143">
    <property type="entry name" value="BPL_LPL_catalytic"/>
</dbReference>
<dbReference type="InterPro" id="IPR000544">
    <property type="entry name" value="Octanoyltransferase"/>
</dbReference>
<dbReference type="InterPro" id="IPR020605">
    <property type="entry name" value="Octanoyltransferase_CS"/>
</dbReference>
<dbReference type="NCBIfam" id="TIGR00214">
    <property type="entry name" value="lipB"/>
    <property type="match status" value="1"/>
</dbReference>
<dbReference type="NCBIfam" id="NF010922">
    <property type="entry name" value="PRK14342.1"/>
    <property type="match status" value="1"/>
</dbReference>
<dbReference type="NCBIfam" id="NF010923">
    <property type="entry name" value="PRK14343.1"/>
    <property type="match status" value="1"/>
</dbReference>
<dbReference type="PANTHER" id="PTHR10993:SF7">
    <property type="entry name" value="LIPOYLTRANSFERASE 2, MITOCHONDRIAL-RELATED"/>
    <property type="match status" value="1"/>
</dbReference>
<dbReference type="PANTHER" id="PTHR10993">
    <property type="entry name" value="OCTANOYLTRANSFERASE"/>
    <property type="match status" value="1"/>
</dbReference>
<dbReference type="Pfam" id="PF21948">
    <property type="entry name" value="LplA-B_cat"/>
    <property type="match status" value="1"/>
</dbReference>
<dbReference type="PIRSF" id="PIRSF016262">
    <property type="entry name" value="LPLase"/>
    <property type="match status" value="1"/>
</dbReference>
<dbReference type="SUPFAM" id="SSF55681">
    <property type="entry name" value="Class II aaRS and biotin synthetases"/>
    <property type="match status" value="1"/>
</dbReference>
<dbReference type="PROSITE" id="PS51733">
    <property type="entry name" value="BPL_LPL_CATALYTIC"/>
    <property type="match status" value="1"/>
</dbReference>
<dbReference type="PROSITE" id="PS01313">
    <property type="entry name" value="LIPB"/>
    <property type="match status" value="1"/>
</dbReference>
<evidence type="ECO:0000255" key="1">
    <source>
        <dbReference type="HAMAP-Rule" id="MF_00013"/>
    </source>
</evidence>
<evidence type="ECO:0000255" key="2">
    <source>
        <dbReference type="PROSITE-ProRule" id="PRU01067"/>
    </source>
</evidence>
<evidence type="ECO:0000256" key="3">
    <source>
        <dbReference type="SAM" id="MobiDB-lite"/>
    </source>
</evidence>
<reference key="1">
    <citation type="journal article" date="2010" name="Genome Biol. Evol.">
        <title>Continuing evolution of Burkholderia mallei through genome reduction and large-scale rearrangements.</title>
        <authorList>
            <person name="Losada L."/>
            <person name="Ronning C.M."/>
            <person name="DeShazer D."/>
            <person name="Woods D."/>
            <person name="Fedorova N."/>
            <person name="Kim H.S."/>
            <person name="Shabalina S.A."/>
            <person name="Pearson T.R."/>
            <person name="Brinkac L."/>
            <person name="Tan P."/>
            <person name="Nandi T."/>
            <person name="Crabtree J."/>
            <person name="Badger J."/>
            <person name="Beckstrom-Sternberg S."/>
            <person name="Saqib M."/>
            <person name="Schutzer S.E."/>
            <person name="Keim P."/>
            <person name="Nierman W.C."/>
        </authorList>
    </citation>
    <scope>NUCLEOTIDE SEQUENCE [LARGE SCALE GENOMIC DNA]</scope>
    <source>
        <strain>668</strain>
    </source>
</reference>
<keyword id="KW-0012">Acyltransferase</keyword>
<keyword id="KW-0963">Cytoplasm</keyword>
<keyword id="KW-0808">Transferase</keyword>
<proteinExistence type="inferred from homology"/>